<reference key="1">
    <citation type="journal article" date="2008" name="J. Bacteriol.">
        <title>Insights into the environmental resistance gene pool from the genome sequence of the multidrug-resistant environmental isolate Escherichia coli SMS-3-5.</title>
        <authorList>
            <person name="Fricke W.F."/>
            <person name="Wright M.S."/>
            <person name="Lindell A.H."/>
            <person name="Harkins D.M."/>
            <person name="Baker-Austin C."/>
            <person name="Ravel J."/>
            <person name="Stepanauskas R."/>
        </authorList>
    </citation>
    <scope>NUCLEOTIDE SEQUENCE [LARGE SCALE GENOMIC DNA]</scope>
    <source>
        <strain>SMS-3-5 / SECEC</strain>
    </source>
</reference>
<dbReference type="EC" id="2.1.1.61" evidence="1"/>
<dbReference type="EC" id="1.5.-.-" evidence="1"/>
<dbReference type="EMBL" id="CP000970">
    <property type="protein sequence ID" value="ACB18096.1"/>
    <property type="molecule type" value="Genomic_DNA"/>
</dbReference>
<dbReference type="RefSeq" id="WP_000683539.1">
    <property type="nucleotide sequence ID" value="NC_010498.1"/>
</dbReference>
<dbReference type="SMR" id="B1LLT0"/>
<dbReference type="KEGG" id="ecm:EcSMS35_2481"/>
<dbReference type="HOGENOM" id="CLU_022427_1_0_6"/>
<dbReference type="Proteomes" id="UP000007011">
    <property type="component" value="Chromosome"/>
</dbReference>
<dbReference type="GO" id="GO:0005737">
    <property type="term" value="C:cytoplasm"/>
    <property type="evidence" value="ECO:0007669"/>
    <property type="project" value="UniProtKB-SubCell"/>
</dbReference>
<dbReference type="GO" id="GO:0050660">
    <property type="term" value="F:flavin adenine dinucleotide binding"/>
    <property type="evidence" value="ECO:0007669"/>
    <property type="project" value="UniProtKB-UniRule"/>
</dbReference>
<dbReference type="GO" id="GO:0016645">
    <property type="term" value="F:oxidoreductase activity, acting on the CH-NH group of donors"/>
    <property type="evidence" value="ECO:0007669"/>
    <property type="project" value="InterPro"/>
</dbReference>
<dbReference type="GO" id="GO:0004808">
    <property type="term" value="F:tRNA (5-methylaminomethyl-2-thiouridylate)(34)-methyltransferase activity"/>
    <property type="evidence" value="ECO:0007669"/>
    <property type="project" value="UniProtKB-EC"/>
</dbReference>
<dbReference type="GO" id="GO:0032259">
    <property type="term" value="P:methylation"/>
    <property type="evidence" value="ECO:0007669"/>
    <property type="project" value="UniProtKB-KW"/>
</dbReference>
<dbReference type="GO" id="GO:0002098">
    <property type="term" value="P:tRNA wobble uridine modification"/>
    <property type="evidence" value="ECO:0007669"/>
    <property type="project" value="TreeGrafter"/>
</dbReference>
<dbReference type="FunFam" id="3.40.50.150:FF:000107">
    <property type="entry name" value="tRNA 5-methylaminomethyl-2-thiouridine biosynthesis bifunctional protein MnmC"/>
    <property type="match status" value="1"/>
</dbReference>
<dbReference type="Gene3D" id="3.30.9.10">
    <property type="entry name" value="D-Amino Acid Oxidase, subunit A, domain 2"/>
    <property type="match status" value="1"/>
</dbReference>
<dbReference type="Gene3D" id="3.50.50.60">
    <property type="entry name" value="FAD/NAD(P)-binding domain"/>
    <property type="match status" value="1"/>
</dbReference>
<dbReference type="Gene3D" id="3.40.50.150">
    <property type="entry name" value="Vaccinia Virus protein VP39"/>
    <property type="match status" value="1"/>
</dbReference>
<dbReference type="HAMAP" id="MF_01102">
    <property type="entry name" value="MnmC"/>
    <property type="match status" value="1"/>
</dbReference>
<dbReference type="InterPro" id="IPR006076">
    <property type="entry name" value="FAD-dep_OxRdtase"/>
</dbReference>
<dbReference type="InterPro" id="IPR036188">
    <property type="entry name" value="FAD/NAD-bd_sf"/>
</dbReference>
<dbReference type="InterPro" id="IPR008471">
    <property type="entry name" value="MnmC-like_methylTransf"/>
</dbReference>
<dbReference type="InterPro" id="IPR029063">
    <property type="entry name" value="SAM-dependent_MTases_sf"/>
</dbReference>
<dbReference type="InterPro" id="IPR023032">
    <property type="entry name" value="tRNA_MAMT_biosynth_bifunc_MnmC"/>
</dbReference>
<dbReference type="InterPro" id="IPR047785">
    <property type="entry name" value="tRNA_MNMC2"/>
</dbReference>
<dbReference type="InterPro" id="IPR017610">
    <property type="entry name" value="tRNA_S-uridine_synth_MnmC_C"/>
</dbReference>
<dbReference type="NCBIfam" id="TIGR03197">
    <property type="entry name" value="MnmC_Cterm"/>
    <property type="match status" value="1"/>
</dbReference>
<dbReference type="NCBIfam" id="NF002480">
    <property type="entry name" value="PRK01747.1-1"/>
    <property type="match status" value="1"/>
</dbReference>
<dbReference type="NCBIfam" id="NF002481">
    <property type="entry name" value="PRK01747.1-2"/>
    <property type="match status" value="1"/>
</dbReference>
<dbReference type="NCBIfam" id="NF002482">
    <property type="entry name" value="PRK01747.1-3"/>
    <property type="match status" value="1"/>
</dbReference>
<dbReference type="NCBIfam" id="NF002484">
    <property type="entry name" value="PRK01747.1-5"/>
    <property type="match status" value="1"/>
</dbReference>
<dbReference type="NCBIfam" id="NF033855">
    <property type="entry name" value="tRNA_MNMC2"/>
    <property type="match status" value="1"/>
</dbReference>
<dbReference type="PANTHER" id="PTHR13847">
    <property type="entry name" value="SARCOSINE DEHYDROGENASE-RELATED"/>
    <property type="match status" value="1"/>
</dbReference>
<dbReference type="PANTHER" id="PTHR13847:SF283">
    <property type="entry name" value="TRNA 5-METHYLAMINOMETHYL-2-THIOURIDINE BIOSYNTHESIS BIFUNCTIONAL PROTEIN MNMC"/>
    <property type="match status" value="1"/>
</dbReference>
<dbReference type="Pfam" id="PF01266">
    <property type="entry name" value="DAO"/>
    <property type="match status" value="1"/>
</dbReference>
<dbReference type="Pfam" id="PF05430">
    <property type="entry name" value="Methyltransf_30"/>
    <property type="match status" value="1"/>
</dbReference>
<dbReference type="SUPFAM" id="SSF51905">
    <property type="entry name" value="FAD/NAD(P)-binding domain"/>
    <property type="match status" value="1"/>
</dbReference>
<dbReference type="SUPFAM" id="SSF53335">
    <property type="entry name" value="S-adenosyl-L-methionine-dependent methyltransferases"/>
    <property type="match status" value="1"/>
</dbReference>
<gene>
    <name evidence="1" type="primary">mnmC</name>
    <name type="ordered locus">EcSMS35_2481</name>
</gene>
<comment type="function">
    <text evidence="1">Catalyzes the last two steps in the biosynthesis of 5-methylaminomethyl-2-thiouridine (mnm(5)s(2)U) at the wobble position (U34) in tRNA. Catalyzes the FAD-dependent demodification of cmnm(5)s(2)U34 to nm(5)s(2)U34, followed by the transfer of a methyl group from S-adenosyl-L-methionine to nm(5)s(2)U34, to form mnm(5)s(2)U34.</text>
</comment>
<comment type="catalytic activity">
    <reaction evidence="1">
        <text>5-aminomethyl-2-thiouridine(34) in tRNA + S-adenosyl-L-methionine = 5-methylaminomethyl-2-thiouridine(34) in tRNA + S-adenosyl-L-homocysteine + H(+)</text>
        <dbReference type="Rhea" id="RHEA:19569"/>
        <dbReference type="Rhea" id="RHEA-COMP:10195"/>
        <dbReference type="Rhea" id="RHEA-COMP:10197"/>
        <dbReference type="ChEBI" id="CHEBI:15378"/>
        <dbReference type="ChEBI" id="CHEBI:57856"/>
        <dbReference type="ChEBI" id="CHEBI:59789"/>
        <dbReference type="ChEBI" id="CHEBI:74454"/>
        <dbReference type="ChEBI" id="CHEBI:74455"/>
        <dbReference type="EC" id="2.1.1.61"/>
    </reaction>
</comment>
<comment type="cofactor">
    <cofactor evidence="1">
        <name>FAD</name>
        <dbReference type="ChEBI" id="CHEBI:57692"/>
    </cofactor>
</comment>
<comment type="subcellular location">
    <subcellularLocation>
        <location evidence="1">Cytoplasm</location>
    </subcellularLocation>
</comment>
<comment type="similarity">
    <text evidence="1">In the N-terminal section; belongs to the methyltransferase superfamily. tRNA (mnm(5)s(2)U34)-methyltransferase family.</text>
</comment>
<comment type="similarity">
    <text evidence="1">In the C-terminal section; belongs to the DAO family.</text>
</comment>
<proteinExistence type="inferred from homology"/>
<evidence type="ECO:0000255" key="1">
    <source>
        <dbReference type="HAMAP-Rule" id="MF_01102"/>
    </source>
</evidence>
<name>MNMC_ECOSM</name>
<organism>
    <name type="scientific">Escherichia coli (strain SMS-3-5 / SECEC)</name>
    <dbReference type="NCBI Taxonomy" id="439855"/>
    <lineage>
        <taxon>Bacteria</taxon>
        <taxon>Pseudomonadati</taxon>
        <taxon>Pseudomonadota</taxon>
        <taxon>Gammaproteobacteria</taxon>
        <taxon>Enterobacterales</taxon>
        <taxon>Enterobacteriaceae</taxon>
        <taxon>Escherichia</taxon>
    </lineage>
</organism>
<protein>
    <recommendedName>
        <fullName evidence="1">tRNA 5-methylaminomethyl-2-thiouridine biosynthesis bifunctional protein MnmC</fullName>
        <shortName evidence="1">tRNA mnm(5)s(2)U biosynthesis bifunctional protein</shortName>
    </recommendedName>
    <domain>
        <recommendedName>
            <fullName evidence="1">tRNA (mnm(5)s(2)U34)-methyltransferase</fullName>
            <ecNumber evidence="1">2.1.1.61</ecNumber>
        </recommendedName>
    </domain>
    <domain>
        <recommendedName>
            <fullName evidence="1">FAD-dependent cmnm(5)s(2)U34 oxidoreductase</fullName>
            <ecNumber evidence="1">1.5.-.-</ecNumber>
        </recommendedName>
    </domain>
</protein>
<accession>B1LLT0</accession>
<feature type="chain" id="PRO_0000347984" description="tRNA 5-methylaminomethyl-2-thiouridine biosynthesis bifunctional protein MnmC">
    <location>
        <begin position="1"/>
        <end position="668"/>
    </location>
</feature>
<feature type="region of interest" description="tRNA (mnm(5)s(2)U34)-methyltransferase">
    <location>
        <begin position="1"/>
        <end position="245"/>
    </location>
</feature>
<feature type="region of interest" description="FAD-dependent cmnm(5)s(2)U34 oxidoreductase">
    <location>
        <begin position="270"/>
        <end position="668"/>
    </location>
</feature>
<keyword id="KW-0963">Cytoplasm</keyword>
<keyword id="KW-0274">FAD</keyword>
<keyword id="KW-0285">Flavoprotein</keyword>
<keyword id="KW-0489">Methyltransferase</keyword>
<keyword id="KW-0511">Multifunctional enzyme</keyword>
<keyword id="KW-0560">Oxidoreductase</keyword>
<keyword id="KW-0949">S-adenosyl-L-methionine</keyword>
<keyword id="KW-0808">Transferase</keyword>
<keyword id="KW-0819">tRNA processing</keyword>
<sequence length="668" mass="74293">MKHYAIQPANLEFNAEGTPVSRDFDDVYFSNDNGLEETRYVFLGGNQLEARFPEHPHPLFVVAESGFGTGLNFLTLWQAFDQFREAHPQAQLQRLHFISFEKFPLARADLALAHHHWPELAPWAEQLQAQWPMPLPGCHRLLFDEGHVTLDLWFGDINELTSQLDDSLNQKVDAWFLDGFAPAKNPDMWTQNLFKAMARLARPGGTLATFTSAGFVRRGLQEAGFSMQKRKGFGRKREMLCGVMEQTLPLPCSTPWFNRTGSNKQEAAIIGGGIASALLSLALLRRGWQVTLYCADEAPALGASGNRQGALYPLLSKHDEALNRFFSNAFTFARRFYDQLPVKFDHDWCGVTQLGWDEKSQHKIAQMLSMDLPAELAVAVEANAVEQITGVATNCSGITYPEGGWLCPAELTRNVLELAQQQGLQIRYQHQLQDLSRKDDGWLLNFAGDQQATHSVVVLANGHQISRFSQTSSLPVYSVAGQVSHIPTTPELAKLKQVLCYDGYLTPQNPANQHHCIGASYHRGSEDTAYSEDDQQQNRQRLIDCFPQAQWAKAVDVSDKEARCGVRCATRDHLPMVGNVPDYDATLVEYASLAEKKDEAVSAPVYDDLFMFAALGSRGLCSAPLCAEILAAQMSEEPIPMDASTLAALNPNRLWVRKLLKGKAVKAG</sequence>